<name>DXS_VIBC3</name>
<sequence>MTLDISKYPTLALANTPDELRSLPKEVLPKLCDELRTYLLNSVSQSSGHLASGLGTVELTVALHYVYHTPFDHLIWDVGHQAYPHKILTGRRDQMPTIRQKDGLHPFPWREESEYDTLSVGHSSTSISAALGMAICAGKEGKDRKVVSVIGDGAITAGMAFEAMNHAGDVHPDMLVVLNDNEMSISENVGALNNHLAQVLSGSLYTSIREGGKKVLSGIPPIKELVRRTEEHLKGMVVPGTLFEELGFNYIGPVDGHDVLELIKTLKNMRELKGPQFLHVMTKKGKGYAPAEKDPIGYHGVPKFDPSHHSLPKSSNTKPTFSKIFGDFLCDMAAQDPKLMAITPAMREGSGMVRFSKEYPSQYFDVAIAEQHAVTLATGMAIAGYHPIVAIYSTFLQRGYDQLIHDVAIMNLPVMFAIDRAGIVGADGQTHQGAFDLSYMRCIPNMLIMAPADENECRQMLYTGHQHQGPSAVRYPRGNGMGVELESSFTALEIGKGRLMRESTACEGEKVAILSFGTLLPNALQAAEKLNATVADMRFVKPLDEALIKQLAQTHDVLVTLEENAIAGGAGAGVIEFLMKEKQLKPVLNLGLPDQFIVQGTQEEMHAELGLDGAGIERAIRDYLAK</sequence>
<protein>
    <recommendedName>
        <fullName evidence="1">1-deoxy-D-xylulose-5-phosphate synthase</fullName>
        <ecNumber evidence="1">2.2.1.7</ecNumber>
    </recommendedName>
    <alternativeName>
        <fullName evidence="1">1-deoxyxylulose-5-phosphate synthase</fullName>
        <shortName evidence="1">DXP synthase</shortName>
        <shortName evidence="1">DXPS</shortName>
    </alternativeName>
</protein>
<evidence type="ECO:0000255" key="1">
    <source>
        <dbReference type="HAMAP-Rule" id="MF_00315"/>
    </source>
</evidence>
<organism>
    <name type="scientific">Vibrio cholerae serotype O1 (strain ATCC 39541 / Classical Ogawa 395 / O395)</name>
    <dbReference type="NCBI Taxonomy" id="345073"/>
    <lineage>
        <taxon>Bacteria</taxon>
        <taxon>Pseudomonadati</taxon>
        <taxon>Pseudomonadota</taxon>
        <taxon>Gammaproteobacteria</taxon>
        <taxon>Vibrionales</taxon>
        <taxon>Vibrionaceae</taxon>
        <taxon>Vibrio</taxon>
    </lineage>
</organism>
<keyword id="KW-0414">Isoprene biosynthesis</keyword>
<keyword id="KW-0460">Magnesium</keyword>
<keyword id="KW-0479">Metal-binding</keyword>
<keyword id="KW-0784">Thiamine biosynthesis</keyword>
<keyword id="KW-0786">Thiamine pyrophosphate</keyword>
<keyword id="KW-0808">Transferase</keyword>
<feature type="chain" id="PRO_1000071998" description="1-deoxy-D-xylulose-5-phosphate synthase">
    <location>
        <begin position="1"/>
        <end position="626"/>
    </location>
</feature>
<feature type="binding site" evidence="1">
    <location>
        <position position="80"/>
    </location>
    <ligand>
        <name>thiamine diphosphate</name>
        <dbReference type="ChEBI" id="CHEBI:58937"/>
    </ligand>
</feature>
<feature type="binding site" evidence="1">
    <location>
        <begin position="121"/>
        <end position="123"/>
    </location>
    <ligand>
        <name>thiamine diphosphate</name>
        <dbReference type="ChEBI" id="CHEBI:58937"/>
    </ligand>
</feature>
<feature type="binding site" evidence="1">
    <location>
        <position position="152"/>
    </location>
    <ligand>
        <name>Mg(2+)</name>
        <dbReference type="ChEBI" id="CHEBI:18420"/>
    </ligand>
</feature>
<feature type="binding site" evidence="1">
    <location>
        <begin position="153"/>
        <end position="154"/>
    </location>
    <ligand>
        <name>thiamine diphosphate</name>
        <dbReference type="ChEBI" id="CHEBI:58937"/>
    </ligand>
</feature>
<feature type="binding site" evidence="1">
    <location>
        <position position="181"/>
    </location>
    <ligand>
        <name>Mg(2+)</name>
        <dbReference type="ChEBI" id="CHEBI:18420"/>
    </ligand>
</feature>
<feature type="binding site" evidence="1">
    <location>
        <position position="181"/>
    </location>
    <ligand>
        <name>thiamine diphosphate</name>
        <dbReference type="ChEBI" id="CHEBI:58937"/>
    </ligand>
</feature>
<feature type="binding site" evidence="1">
    <location>
        <position position="288"/>
    </location>
    <ligand>
        <name>thiamine diphosphate</name>
        <dbReference type="ChEBI" id="CHEBI:58937"/>
    </ligand>
</feature>
<feature type="binding site" evidence="1">
    <location>
        <position position="370"/>
    </location>
    <ligand>
        <name>thiamine diphosphate</name>
        <dbReference type="ChEBI" id="CHEBI:58937"/>
    </ligand>
</feature>
<gene>
    <name evidence="1" type="primary">dxs</name>
    <name type="ordered locus">VC0395_A0412</name>
    <name type="ordered locus">VC395_0905</name>
</gene>
<proteinExistence type="inferred from homology"/>
<comment type="function">
    <text evidence="1">Catalyzes the acyloin condensation reaction between C atoms 2 and 3 of pyruvate and glyceraldehyde 3-phosphate to yield 1-deoxy-D-xylulose-5-phosphate (DXP).</text>
</comment>
<comment type="catalytic activity">
    <reaction evidence="1">
        <text>D-glyceraldehyde 3-phosphate + pyruvate + H(+) = 1-deoxy-D-xylulose 5-phosphate + CO2</text>
        <dbReference type="Rhea" id="RHEA:12605"/>
        <dbReference type="ChEBI" id="CHEBI:15361"/>
        <dbReference type="ChEBI" id="CHEBI:15378"/>
        <dbReference type="ChEBI" id="CHEBI:16526"/>
        <dbReference type="ChEBI" id="CHEBI:57792"/>
        <dbReference type="ChEBI" id="CHEBI:59776"/>
        <dbReference type="EC" id="2.2.1.7"/>
    </reaction>
</comment>
<comment type="cofactor">
    <cofactor evidence="1">
        <name>Mg(2+)</name>
        <dbReference type="ChEBI" id="CHEBI:18420"/>
    </cofactor>
    <text evidence="1">Binds 1 Mg(2+) ion per subunit.</text>
</comment>
<comment type="cofactor">
    <cofactor evidence="1">
        <name>thiamine diphosphate</name>
        <dbReference type="ChEBI" id="CHEBI:58937"/>
    </cofactor>
    <text evidence="1">Binds 1 thiamine pyrophosphate per subunit.</text>
</comment>
<comment type="pathway">
    <text evidence="1">Metabolic intermediate biosynthesis; 1-deoxy-D-xylulose 5-phosphate biosynthesis; 1-deoxy-D-xylulose 5-phosphate from D-glyceraldehyde 3-phosphate and pyruvate: step 1/1.</text>
</comment>
<comment type="subunit">
    <text evidence="1">Homodimer.</text>
</comment>
<comment type="similarity">
    <text evidence="1">Belongs to the transketolase family. DXPS subfamily.</text>
</comment>
<dbReference type="EC" id="2.2.1.7" evidence="1"/>
<dbReference type="EMBL" id="CP000627">
    <property type="protein sequence ID" value="ABQ21549.1"/>
    <property type="molecule type" value="Genomic_DNA"/>
</dbReference>
<dbReference type="EMBL" id="CP001235">
    <property type="protein sequence ID" value="ACP08919.1"/>
    <property type="molecule type" value="Genomic_DNA"/>
</dbReference>
<dbReference type="RefSeq" id="WP_000171170.1">
    <property type="nucleotide sequence ID" value="NZ_JAACZH010000033.1"/>
</dbReference>
<dbReference type="SMR" id="A5F331"/>
<dbReference type="KEGG" id="vco:VC0395_A0412"/>
<dbReference type="KEGG" id="vcr:VC395_0905"/>
<dbReference type="PATRIC" id="fig|345073.21.peg.875"/>
<dbReference type="eggNOG" id="COG1154">
    <property type="taxonomic scope" value="Bacteria"/>
</dbReference>
<dbReference type="HOGENOM" id="CLU_009227_1_4_6"/>
<dbReference type="OrthoDB" id="9803371at2"/>
<dbReference type="UniPathway" id="UPA00064">
    <property type="reaction ID" value="UER00091"/>
</dbReference>
<dbReference type="Proteomes" id="UP000000249">
    <property type="component" value="Chromosome 2"/>
</dbReference>
<dbReference type="GO" id="GO:0005829">
    <property type="term" value="C:cytosol"/>
    <property type="evidence" value="ECO:0007669"/>
    <property type="project" value="TreeGrafter"/>
</dbReference>
<dbReference type="GO" id="GO:0008661">
    <property type="term" value="F:1-deoxy-D-xylulose-5-phosphate synthase activity"/>
    <property type="evidence" value="ECO:0007669"/>
    <property type="project" value="UniProtKB-UniRule"/>
</dbReference>
<dbReference type="GO" id="GO:0000287">
    <property type="term" value="F:magnesium ion binding"/>
    <property type="evidence" value="ECO:0007669"/>
    <property type="project" value="UniProtKB-UniRule"/>
</dbReference>
<dbReference type="GO" id="GO:0030976">
    <property type="term" value="F:thiamine pyrophosphate binding"/>
    <property type="evidence" value="ECO:0007669"/>
    <property type="project" value="UniProtKB-UniRule"/>
</dbReference>
<dbReference type="GO" id="GO:0052865">
    <property type="term" value="P:1-deoxy-D-xylulose 5-phosphate biosynthetic process"/>
    <property type="evidence" value="ECO:0007669"/>
    <property type="project" value="UniProtKB-UniPathway"/>
</dbReference>
<dbReference type="GO" id="GO:0019288">
    <property type="term" value="P:isopentenyl diphosphate biosynthetic process, methylerythritol 4-phosphate pathway"/>
    <property type="evidence" value="ECO:0007669"/>
    <property type="project" value="TreeGrafter"/>
</dbReference>
<dbReference type="GO" id="GO:0016114">
    <property type="term" value="P:terpenoid biosynthetic process"/>
    <property type="evidence" value="ECO:0007669"/>
    <property type="project" value="UniProtKB-UniRule"/>
</dbReference>
<dbReference type="GO" id="GO:0009228">
    <property type="term" value="P:thiamine biosynthetic process"/>
    <property type="evidence" value="ECO:0007669"/>
    <property type="project" value="UniProtKB-UniRule"/>
</dbReference>
<dbReference type="CDD" id="cd02007">
    <property type="entry name" value="TPP_DXS"/>
    <property type="match status" value="1"/>
</dbReference>
<dbReference type="CDD" id="cd07033">
    <property type="entry name" value="TPP_PYR_DXS_TK_like"/>
    <property type="match status" value="1"/>
</dbReference>
<dbReference type="FunFam" id="3.40.50.920:FF:000002">
    <property type="entry name" value="1-deoxy-D-xylulose-5-phosphate synthase"/>
    <property type="match status" value="1"/>
</dbReference>
<dbReference type="FunFam" id="3.40.50.970:FF:000005">
    <property type="entry name" value="1-deoxy-D-xylulose-5-phosphate synthase"/>
    <property type="match status" value="1"/>
</dbReference>
<dbReference type="Gene3D" id="3.40.50.920">
    <property type="match status" value="1"/>
</dbReference>
<dbReference type="Gene3D" id="3.40.50.970">
    <property type="match status" value="2"/>
</dbReference>
<dbReference type="HAMAP" id="MF_00315">
    <property type="entry name" value="DXP_synth"/>
    <property type="match status" value="1"/>
</dbReference>
<dbReference type="InterPro" id="IPR005477">
    <property type="entry name" value="Dxylulose-5-P_synthase"/>
</dbReference>
<dbReference type="InterPro" id="IPR029061">
    <property type="entry name" value="THDP-binding"/>
</dbReference>
<dbReference type="InterPro" id="IPR009014">
    <property type="entry name" value="Transketo_C/PFOR_II"/>
</dbReference>
<dbReference type="InterPro" id="IPR005475">
    <property type="entry name" value="Transketolase-like_Pyr-bd"/>
</dbReference>
<dbReference type="InterPro" id="IPR020826">
    <property type="entry name" value="Transketolase_BS"/>
</dbReference>
<dbReference type="InterPro" id="IPR033248">
    <property type="entry name" value="Transketolase_C"/>
</dbReference>
<dbReference type="InterPro" id="IPR049557">
    <property type="entry name" value="Transketolase_CS"/>
</dbReference>
<dbReference type="NCBIfam" id="TIGR00204">
    <property type="entry name" value="dxs"/>
    <property type="match status" value="1"/>
</dbReference>
<dbReference type="NCBIfam" id="NF003933">
    <property type="entry name" value="PRK05444.2-2"/>
    <property type="match status" value="1"/>
</dbReference>
<dbReference type="PANTHER" id="PTHR43322">
    <property type="entry name" value="1-D-DEOXYXYLULOSE 5-PHOSPHATE SYNTHASE-RELATED"/>
    <property type="match status" value="1"/>
</dbReference>
<dbReference type="PANTHER" id="PTHR43322:SF5">
    <property type="entry name" value="1-DEOXY-D-XYLULOSE-5-PHOSPHATE SYNTHASE, CHLOROPLASTIC"/>
    <property type="match status" value="1"/>
</dbReference>
<dbReference type="Pfam" id="PF13292">
    <property type="entry name" value="DXP_synthase_N"/>
    <property type="match status" value="1"/>
</dbReference>
<dbReference type="Pfam" id="PF02779">
    <property type="entry name" value="Transket_pyr"/>
    <property type="match status" value="1"/>
</dbReference>
<dbReference type="Pfam" id="PF02780">
    <property type="entry name" value="Transketolase_C"/>
    <property type="match status" value="1"/>
</dbReference>
<dbReference type="SMART" id="SM00861">
    <property type="entry name" value="Transket_pyr"/>
    <property type="match status" value="1"/>
</dbReference>
<dbReference type="SUPFAM" id="SSF52518">
    <property type="entry name" value="Thiamin diphosphate-binding fold (THDP-binding)"/>
    <property type="match status" value="2"/>
</dbReference>
<dbReference type="SUPFAM" id="SSF52922">
    <property type="entry name" value="TK C-terminal domain-like"/>
    <property type="match status" value="1"/>
</dbReference>
<dbReference type="PROSITE" id="PS00801">
    <property type="entry name" value="TRANSKETOLASE_1"/>
    <property type="match status" value="1"/>
</dbReference>
<dbReference type="PROSITE" id="PS00802">
    <property type="entry name" value="TRANSKETOLASE_2"/>
    <property type="match status" value="1"/>
</dbReference>
<reference key="1">
    <citation type="submission" date="2007-03" db="EMBL/GenBank/DDBJ databases">
        <authorList>
            <person name="Heidelberg J."/>
        </authorList>
    </citation>
    <scope>NUCLEOTIDE SEQUENCE [LARGE SCALE GENOMIC DNA]</scope>
    <source>
        <strain>ATCC 39541 / Classical Ogawa 395 / O395</strain>
    </source>
</reference>
<reference key="2">
    <citation type="journal article" date="2008" name="PLoS ONE">
        <title>A recalibrated molecular clock and independent origins for the cholera pandemic clones.</title>
        <authorList>
            <person name="Feng L."/>
            <person name="Reeves P.R."/>
            <person name="Lan R."/>
            <person name="Ren Y."/>
            <person name="Gao C."/>
            <person name="Zhou Z."/>
            <person name="Ren Y."/>
            <person name="Cheng J."/>
            <person name="Wang W."/>
            <person name="Wang J."/>
            <person name="Qian W."/>
            <person name="Li D."/>
            <person name="Wang L."/>
        </authorList>
    </citation>
    <scope>NUCLEOTIDE SEQUENCE [LARGE SCALE GENOMIC DNA]</scope>
    <source>
        <strain>ATCC 39541 / Classical Ogawa 395 / O395</strain>
    </source>
</reference>
<accession>A5F331</accession>
<accession>C3LYQ3</accession>